<proteinExistence type="inferred from homology"/>
<organism>
    <name type="scientific">Coxiella burnetii (strain CbuK_Q154)</name>
    <name type="common">Coxiella burnetii (strain Q154)</name>
    <dbReference type="NCBI Taxonomy" id="434924"/>
    <lineage>
        <taxon>Bacteria</taxon>
        <taxon>Pseudomonadati</taxon>
        <taxon>Pseudomonadota</taxon>
        <taxon>Gammaproteobacteria</taxon>
        <taxon>Legionellales</taxon>
        <taxon>Coxiellaceae</taxon>
        <taxon>Coxiella</taxon>
    </lineage>
</organism>
<reference key="1">
    <citation type="journal article" date="2009" name="Infect. Immun.">
        <title>Comparative genomics reveal extensive transposon-mediated genomic plasticity and diversity among potential effector proteins within the genus Coxiella.</title>
        <authorList>
            <person name="Beare P.A."/>
            <person name="Unsworth N."/>
            <person name="Andoh M."/>
            <person name="Voth D.E."/>
            <person name="Omsland A."/>
            <person name="Gilk S.D."/>
            <person name="Williams K.P."/>
            <person name="Sobral B.W."/>
            <person name="Kupko J.J. III"/>
            <person name="Porcella S.F."/>
            <person name="Samuel J.E."/>
            <person name="Heinzen R.A."/>
        </authorList>
    </citation>
    <scope>NUCLEOTIDE SEQUENCE [LARGE SCALE GENOMIC DNA]</scope>
    <source>
        <strain>CbuK_Q154</strain>
    </source>
</reference>
<evidence type="ECO:0000255" key="1">
    <source>
        <dbReference type="HAMAP-Rule" id="MF_00531"/>
    </source>
</evidence>
<evidence type="ECO:0000305" key="2"/>
<sequence length="95" mass="10818">MPRSTNKGPFVDHHLMKKVDQAQKEGSKRPIKTWSRRSMVVPEMVGLTIAIHNGRQHVPVYISENMVGHKLGEFAITRTFRAHSGDRKAKKEGEK</sequence>
<accession>B6J5D6</accession>
<comment type="function">
    <text evidence="1">Protein S19 forms a complex with S13 that binds strongly to the 16S ribosomal RNA.</text>
</comment>
<comment type="similarity">
    <text evidence="1">Belongs to the universal ribosomal protein uS19 family.</text>
</comment>
<keyword id="KW-0687">Ribonucleoprotein</keyword>
<keyword id="KW-0689">Ribosomal protein</keyword>
<keyword id="KW-0694">RNA-binding</keyword>
<keyword id="KW-0699">rRNA-binding</keyword>
<gene>
    <name evidence="1" type="primary">rpsS</name>
    <name type="ordered locus">CbuK_0437</name>
</gene>
<feature type="chain" id="PRO_1000127956" description="Small ribosomal subunit protein uS19">
    <location>
        <begin position="1"/>
        <end position="95"/>
    </location>
</feature>
<name>RS19_COXB1</name>
<protein>
    <recommendedName>
        <fullName evidence="1">Small ribosomal subunit protein uS19</fullName>
    </recommendedName>
    <alternativeName>
        <fullName evidence="2">30S ribosomal protein S19</fullName>
    </alternativeName>
</protein>
<dbReference type="EMBL" id="CP001020">
    <property type="protein sequence ID" value="ACJ19720.1"/>
    <property type="molecule type" value="Genomic_DNA"/>
</dbReference>
<dbReference type="RefSeq" id="WP_005771538.1">
    <property type="nucleotide sequence ID" value="NC_011528.1"/>
</dbReference>
<dbReference type="SMR" id="B6J5D6"/>
<dbReference type="KEGG" id="cbc:CbuK_0437"/>
<dbReference type="HOGENOM" id="CLU_144911_0_1_6"/>
<dbReference type="GO" id="GO:0005737">
    <property type="term" value="C:cytoplasm"/>
    <property type="evidence" value="ECO:0007669"/>
    <property type="project" value="UniProtKB-ARBA"/>
</dbReference>
<dbReference type="GO" id="GO:0015935">
    <property type="term" value="C:small ribosomal subunit"/>
    <property type="evidence" value="ECO:0007669"/>
    <property type="project" value="InterPro"/>
</dbReference>
<dbReference type="GO" id="GO:0019843">
    <property type="term" value="F:rRNA binding"/>
    <property type="evidence" value="ECO:0007669"/>
    <property type="project" value="UniProtKB-UniRule"/>
</dbReference>
<dbReference type="GO" id="GO:0003735">
    <property type="term" value="F:structural constituent of ribosome"/>
    <property type="evidence" value="ECO:0007669"/>
    <property type="project" value="InterPro"/>
</dbReference>
<dbReference type="GO" id="GO:0000028">
    <property type="term" value="P:ribosomal small subunit assembly"/>
    <property type="evidence" value="ECO:0007669"/>
    <property type="project" value="TreeGrafter"/>
</dbReference>
<dbReference type="GO" id="GO:0006412">
    <property type="term" value="P:translation"/>
    <property type="evidence" value="ECO:0007669"/>
    <property type="project" value="UniProtKB-UniRule"/>
</dbReference>
<dbReference type="FunFam" id="3.30.860.10:FF:000001">
    <property type="entry name" value="30S ribosomal protein S19"/>
    <property type="match status" value="1"/>
</dbReference>
<dbReference type="Gene3D" id="3.30.860.10">
    <property type="entry name" value="30s Ribosomal Protein S19, Chain A"/>
    <property type="match status" value="1"/>
</dbReference>
<dbReference type="HAMAP" id="MF_00531">
    <property type="entry name" value="Ribosomal_uS19"/>
    <property type="match status" value="1"/>
</dbReference>
<dbReference type="InterPro" id="IPR002222">
    <property type="entry name" value="Ribosomal_uS19"/>
</dbReference>
<dbReference type="InterPro" id="IPR005732">
    <property type="entry name" value="Ribosomal_uS19_bac-type"/>
</dbReference>
<dbReference type="InterPro" id="IPR020934">
    <property type="entry name" value="Ribosomal_uS19_CS"/>
</dbReference>
<dbReference type="InterPro" id="IPR023575">
    <property type="entry name" value="Ribosomal_uS19_SF"/>
</dbReference>
<dbReference type="NCBIfam" id="TIGR01050">
    <property type="entry name" value="rpsS_bact"/>
    <property type="match status" value="1"/>
</dbReference>
<dbReference type="PANTHER" id="PTHR11880">
    <property type="entry name" value="RIBOSOMAL PROTEIN S19P FAMILY MEMBER"/>
    <property type="match status" value="1"/>
</dbReference>
<dbReference type="PANTHER" id="PTHR11880:SF8">
    <property type="entry name" value="SMALL RIBOSOMAL SUBUNIT PROTEIN US19M"/>
    <property type="match status" value="1"/>
</dbReference>
<dbReference type="Pfam" id="PF00203">
    <property type="entry name" value="Ribosomal_S19"/>
    <property type="match status" value="1"/>
</dbReference>
<dbReference type="PIRSF" id="PIRSF002144">
    <property type="entry name" value="Ribosomal_S19"/>
    <property type="match status" value="1"/>
</dbReference>
<dbReference type="PRINTS" id="PR00975">
    <property type="entry name" value="RIBOSOMALS19"/>
</dbReference>
<dbReference type="SUPFAM" id="SSF54570">
    <property type="entry name" value="Ribosomal protein S19"/>
    <property type="match status" value="1"/>
</dbReference>
<dbReference type="PROSITE" id="PS00323">
    <property type="entry name" value="RIBOSOMAL_S19"/>
    <property type="match status" value="1"/>
</dbReference>